<dbReference type="EMBL" id="BA000022">
    <property type="protein sequence ID" value="BAA17429.1"/>
    <property type="molecule type" value="Genomic_DNA"/>
</dbReference>
<dbReference type="PIR" id="S77326">
    <property type="entry name" value="S77326"/>
</dbReference>
<dbReference type="SMR" id="P73389"/>
<dbReference type="STRING" id="1148.gene:10498293"/>
<dbReference type="PaxDb" id="1148-1652508"/>
<dbReference type="EnsemblBacteria" id="BAA17429">
    <property type="protein sequence ID" value="BAA17429"/>
    <property type="gene ID" value="BAA17429"/>
</dbReference>
<dbReference type="KEGG" id="syn:slr1829"/>
<dbReference type="eggNOG" id="ENOG502ZA44">
    <property type="taxonomic scope" value="Bacteria"/>
</dbReference>
<dbReference type="InParanoid" id="P73389"/>
<dbReference type="UniPathway" id="UPA00917"/>
<dbReference type="Proteomes" id="UP000001425">
    <property type="component" value="Chromosome"/>
</dbReference>
<dbReference type="GO" id="GO:0005737">
    <property type="term" value="C:cytoplasm"/>
    <property type="evidence" value="ECO:0007669"/>
    <property type="project" value="UniProtKB-SubCell"/>
</dbReference>
<dbReference type="GO" id="GO:0042619">
    <property type="term" value="P:poly-hydroxybutyrate biosynthetic process"/>
    <property type="evidence" value="ECO:0000314"/>
    <property type="project" value="UniProtKB"/>
</dbReference>
<dbReference type="InterPro" id="IPR010123">
    <property type="entry name" value="PHA_synth_III_E"/>
</dbReference>
<dbReference type="NCBIfam" id="TIGR01834">
    <property type="entry name" value="PHA_synth_III_E"/>
    <property type="match status" value="1"/>
</dbReference>
<dbReference type="Pfam" id="PF09712">
    <property type="entry name" value="PHA_synth_III_E"/>
    <property type="match status" value="1"/>
</dbReference>
<reference key="1">
    <citation type="journal article" date="1996" name="DNA Res.">
        <title>Sequence analysis of the genome of the unicellular cyanobacterium Synechocystis sp. strain PCC6803. II. Sequence determination of the entire genome and assignment of potential protein-coding regions.</title>
        <authorList>
            <person name="Kaneko T."/>
            <person name="Sato S."/>
            <person name="Kotani H."/>
            <person name="Tanaka A."/>
            <person name="Asamizu E."/>
            <person name="Nakamura Y."/>
            <person name="Miyajima N."/>
            <person name="Hirosawa M."/>
            <person name="Sugiura M."/>
            <person name="Sasamoto S."/>
            <person name="Kimura T."/>
            <person name="Hosouchi T."/>
            <person name="Matsuno A."/>
            <person name="Muraki A."/>
            <person name="Nakazaki N."/>
            <person name="Naruo K."/>
            <person name="Okumura S."/>
            <person name="Shimpo S."/>
            <person name="Takeuchi C."/>
            <person name="Wada T."/>
            <person name="Watanabe A."/>
            <person name="Yamada M."/>
            <person name="Yasuda M."/>
            <person name="Tabata S."/>
        </authorList>
    </citation>
    <scope>NUCLEOTIDE SEQUENCE [LARGE SCALE GENOMIC DNA]</scope>
    <source>
        <strain>ATCC 27184 / PCC 6803 / Kazusa</strain>
    </source>
</reference>
<reference key="2">
    <citation type="journal article" date="1992" name="FEMS Microbiol. Rev.">
        <title>Molecular basis for biosynthesis and accumulation of polyhydroxyalkanoic acids in bacteria.</title>
        <authorList>
            <person name="Steinbuechel A."/>
            <person name="Hustede E."/>
            <person name="Liebergesell M."/>
            <person name="Pieper U."/>
            <person name="Timm A."/>
            <person name="Valentin H."/>
        </authorList>
    </citation>
    <scope>GENE NAME</scope>
</reference>
<reference key="3">
    <citation type="journal article" date="1998" name="Arch. Microbiol.">
        <title>Synechocystis sp. PCC6803 possesses a two-component polyhydroxyalkanoic acid synthase similar to that of anoxygenic purple sulfur bacteria.</title>
        <authorList>
            <person name="Hein S."/>
            <person name="Tran H."/>
            <person name="Steinbuechel A."/>
        </authorList>
    </citation>
    <scope>FUNCTION</scope>
    <scope>PATHWAY</scope>
    <scope>SUBUNIT</scope>
    <scope>EXPRESSION IN E.COLI</scope>
    <source>
        <strain>ATCC 27184 / PCC 6803 / N-1</strain>
    </source>
</reference>
<reference key="4">
    <citation type="journal article" date="2015" name="Biochemistry">
        <title>Co-expression of two polyhydroxyalkanoate synthase subunits from Synechocystis sp. PCC 6803 by cell-free synthesis and their specific activity for polymerization of 3-hydroxybutyryl-coenzyme A.</title>
        <authorList>
            <person name="Numata K."/>
            <person name="Motoda Y."/>
            <person name="Watanabe S."/>
            <person name="Osanai T."/>
            <person name="Kigawa T."/>
        </authorList>
    </citation>
    <scope>FUNCTION</scope>
    <scope>BIOPHYSICOCHEMICAL PROPERTIES</scope>
    <scope>SUBUNIT</scope>
    <source>
        <strain>ATCC 27184 / PCC 6803 / N-1</strain>
    </source>
</reference>
<name>PHAE_SYNY3</name>
<sequence length="330" mass="38047">MESTNKTWTELMTPLSQFWLESSSQAWKNWFDLMAKGGAGAMMGSAPQSFESLPQQFLQSQQFYGELLKLSFEAWQSLWPKLDNGSAPGAVQGYLKQLQTQIEQYTATTQALQGDMDGLWQCYIKEVQRFSQLWLSTWQSSVAPLGKLPTGDIHAWLDLNNLYGDALYNKNLSSFMRSPLLGPSREMNGKLLRAFDDWVKLSQAMADYQLLEADIQYRGFAALMEDLLARAKEDKPVKTWKEFQQRWAIAADQVFEEAFCEEKNLKVRGKFINALNRYRIQQQEILEAWLKMLNLPTRSEVDEIHQTIYQLRKEVKSLKKRLGETEANPG</sequence>
<protein>
    <recommendedName>
        <fullName>Poly(3-hydroxyalkanoate) polymerase subunit PhaE</fullName>
        <shortName>PHA polymerase</shortName>
    </recommendedName>
    <alternativeName>
        <fullName>PHB synthase subunit PhaE</fullName>
    </alternativeName>
    <alternativeName>
        <fullName>Poly(3-hydroxybutyrate) polymerase subunit PhaE</fullName>
        <shortName>PHB polymerase</shortName>
    </alternativeName>
    <alternativeName>
        <fullName>Poly(hydroxyalkanoic acid) synthase subunit PhaE</fullName>
        <shortName evidence="5">PHA synthase</shortName>
        <shortName evidence="5">Polyhydroxyalkanoic acid synthase subunit PhaE</shortName>
    </alternativeName>
</protein>
<organism>
    <name type="scientific">Synechocystis sp. (strain ATCC 27184 / PCC 6803 / Kazusa)</name>
    <dbReference type="NCBI Taxonomy" id="1111708"/>
    <lineage>
        <taxon>Bacteria</taxon>
        <taxon>Bacillati</taxon>
        <taxon>Cyanobacteriota</taxon>
        <taxon>Cyanophyceae</taxon>
        <taxon>Synechococcales</taxon>
        <taxon>Merismopediaceae</taxon>
        <taxon>Synechocystis</taxon>
    </lineage>
</organism>
<keyword id="KW-0175">Coiled coil</keyword>
<keyword id="KW-0963">Cytoplasm</keyword>
<keyword id="KW-0583">PHB biosynthesis</keyword>
<keyword id="KW-1185">Reference proteome</keyword>
<proteinExistence type="evidence at protein level"/>
<feature type="chain" id="PRO_0000438833" description="Poly(3-hydroxyalkanoate) polymerase subunit PhaE">
    <location>
        <begin position="1"/>
        <end position="330"/>
    </location>
</feature>
<feature type="coiled-coil region" evidence="2">
    <location>
        <begin position="298"/>
        <end position="328"/>
    </location>
</feature>
<gene>
    <name evidence="5" type="primary">phaE</name>
    <name type="ordered locus">slr1829</name>
</gene>
<accession>P73389</accession>
<evidence type="ECO:0000250" key="1">
    <source>
        <dbReference type="UniProtKB" id="P45372"/>
    </source>
</evidence>
<evidence type="ECO:0000255" key="2"/>
<evidence type="ECO:0000269" key="3">
    <source>
    </source>
</evidence>
<evidence type="ECO:0000269" key="4">
    <source>
    </source>
</evidence>
<evidence type="ECO:0000303" key="5">
    <source>
    </source>
</evidence>
<evidence type="ECO:0000305" key="6"/>
<evidence type="ECO:0000305" key="7">
    <source>
    </source>
</evidence>
<comment type="function">
    <text evidence="1 3 4">When expressed in E.coli with Synechocystis PhaC and C.necator PhaA and PhaB, confers the ability to synthesize up to 13% (w/w) poly(3-hydroxybutyrate) (PHB) depending on the carbon source; all 4 genes are necessary for PHB production (PubMed:9683655). Cell-free in vitro coexpression with PhaE gives a heterodimer able to polymerize 3-hydroxybutyrate-CoA (PubMed:25629766). This subunit has no catalytic activity but enhances the activity of PhaC, the catalytic subunit (By similarity).</text>
</comment>
<comment type="biophysicochemical properties">
    <kinetics>
        <KM evidence="3">478 uM for 3-hydroxybutyryl-CoA</KM>
    </kinetics>
</comment>
<comment type="pathway">
    <text evidence="7">Biopolymer metabolism; poly-(R)-3-hydroxybutanoate biosynthesis.</text>
</comment>
<comment type="subunit">
    <text evidence="3 4">Forms a heterodimer with PhaC, which may multimerize in the presence of 3-hydroxybutyryl-CoA (PubMed:25629766). Both subunits are required for PHB synthesis in E.coli and in PHA-negative A.eutrophus.</text>
</comment>
<comment type="subcellular location">
    <subcellularLocation>
        <location evidence="1">Cytoplasm</location>
    </subcellularLocation>
</comment>
<comment type="biotechnology">
    <text evidence="6">Poly(3-hydroxyalkanoic acids) (PHA), of which PHB is among the most common compounds, are prokaryotic intracellular storage compounds with potential uses as renewable, biodegradable thermoplastics. Cyanobacterial PHB synthesis is particularly attractive as cyanobacteria use CO(2) as the carbon source.</text>
</comment>
<comment type="miscellaneous">
    <text evidence="4">Nitrogen-free medium induces chlorosis in Synechocystis, leading to the degradation of the photosynthetic apparatus and concomitant accumulation of cytoplasmic polyhydroxyalkanoic acid (PHA) granules which in this cyanobacterium are composed of PHB.</text>
</comment>
<comment type="similarity">
    <text evidence="6">Belongs to the PHA/PHB synthase family. Type III PhaE subfamily.</text>
</comment>